<proteinExistence type="evidence at protein level"/>
<reference key="1">
    <citation type="journal article" date="1998" name="Nature">
        <title>Deciphering the biology of Mycobacterium tuberculosis from the complete genome sequence.</title>
        <authorList>
            <person name="Cole S.T."/>
            <person name="Brosch R."/>
            <person name="Parkhill J."/>
            <person name="Garnier T."/>
            <person name="Churcher C.M."/>
            <person name="Harris D.E."/>
            <person name="Gordon S.V."/>
            <person name="Eiglmeier K."/>
            <person name="Gas S."/>
            <person name="Barry C.E. III"/>
            <person name="Tekaia F."/>
            <person name="Badcock K."/>
            <person name="Basham D."/>
            <person name="Brown D."/>
            <person name="Chillingworth T."/>
            <person name="Connor R."/>
            <person name="Davies R.M."/>
            <person name="Devlin K."/>
            <person name="Feltwell T."/>
            <person name="Gentles S."/>
            <person name="Hamlin N."/>
            <person name="Holroyd S."/>
            <person name="Hornsby T."/>
            <person name="Jagels K."/>
            <person name="Krogh A."/>
            <person name="McLean J."/>
            <person name="Moule S."/>
            <person name="Murphy L.D."/>
            <person name="Oliver S."/>
            <person name="Osborne J."/>
            <person name="Quail M.A."/>
            <person name="Rajandream M.A."/>
            <person name="Rogers J."/>
            <person name="Rutter S."/>
            <person name="Seeger K."/>
            <person name="Skelton S."/>
            <person name="Squares S."/>
            <person name="Squares R."/>
            <person name="Sulston J.E."/>
            <person name="Taylor K."/>
            <person name="Whitehead S."/>
            <person name="Barrell B.G."/>
        </authorList>
    </citation>
    <scope>NUCLEOTIDE SEQUENCE [LARGE SCALE GENOMIC DNA]</scope>
    <source>
        <strain>ATCC 25618 / H37Rv</strain>
    </source>
</reference>
<reference key="2">
    <citation type="journal article" date="2011" name="Mol. Cell. Proteomics">
        <title>Proteogenomic analysis of Mycobacterium tuberculosis by high resolution mass spectrometry.</title>
        <authorList>
            <person name="Kelkar D.S."/>
            <person name="Kumar D."/>
            <person name="Kumar P."/>
            <person name="Balakrishnan L."/>
            <person name="Muthusamy B."/>
            <person name="Yadav A.K."/>
            <person name="Shrivastava P."/>
            <person name="Marimuthu A."/>
            <person name="Anand S."/>
            <person name="Sundaram H."/>
            <person name="Kingsbury R."/>
            <person name="Harsha H.C."/>
            <person name="Nair B."/>
            <person name="Prasad T.S."/>
            <person name="Chauhan D.S."/>
            <person name="Katoch K."/>
            <person name="Katoch V.M."/>
            <person name="Kumar P."/>
            <person name="Chaerkady R."/>
            <person name="Ramachandran S."/>
            <person name="Dash D."/>
            <person name="Pandey A."/>
        </authorList>
    </citation>
    <scope>ACETYLATION [LARGE SCALE ANALYSIS] AT SER-2</scope>
    <scope>CLEAVAGE OF INITIATOR METHIONINE [LARGE SCALE ANALYSIS]</scope>
    <scope>IDENTIFICATION BY MASS SPECTROMETRY [LARGE SCALE ANALYSIS]</scope>
    <source>
        <strain>ATCC 25618 / H37Rv</strain>
    </source>
</reference>
<keyword id="KW-0007">Acetylation</keyword>
<keyword id="KW-1003">Cell membrane</keyword>
<keyword id="KW-0472">Membrane</keyword>
<keyword id="KW-1185">Reference proteome</keyword>
<keyword id="KW-0812">Transmembrane</keyword>
<keyword id="KW-1133">Transmembrane helix</keyword>
<dbReference type="EMBL" id="AL123456">
    <property type="protein sequence ID" value="CCP43366.1"/>
    <property type="molecule type" value="Genomic_DNA"/>
</dbReference>
<dbReference type="PIR" id="F70611">
    <property type="entry name" value="F70611"/>
</dbReference>
<dbReference type="RefSeq" id="NP_215139.1">
    <property type="nucleotide sequence ID" value="NC_000962.3"/>
</dbReference>
<dbReference type="RefSeq" id="WP_003403239.1">
    <property type="nucleotide sequence ID" value="NZ_NVQJ01000033.1"/>
</dbReference>
<dbReference type="STRING" id="83332.Rv0625c"/>
<dbReference type="iPTMnet" id="P9WFS5"/>
<dbReference type="PaxDb" id="83332-Rv0625c"/>
<dbReference type="DNASU" id="887967"/>
<dbReference type="GeneID" id="887967"/>
<dbReference type="KEGG" id="mtu:Rv0625c"/>
<dbReference type="KEGG" id="mtv:RVBD_0625c"/>
<dbReference type="TubercuList" id="Rv0625c"/>
<dbReference type="eggNOG" id="COG0398">
    <property type="taxonomic scope" value="Bacteria"/>
</dbReference>
<dbReference type="InParanoid" id="P9WFS5"/>
<dbReference type="OrthoDB" id="4532359at2"/>
<dbReference type="Proteomes" id="UP000001584">
    <property type="component" value="Chromosome"/>
</dbReference>
<dbReference type="GO" id="GO:0005886">
    <property type="term" value="C:plasma membrane"/>
    <property type="evidence" value="ECO:0000318"/>
    <property type="project" value="GO_Central"/>
</dbReference>
<dbReference type="InterPro" id="IPR015414">
    <property type="entry name" value="TMEM64"/>
</dbReference>
<dbReference type="InterPro" id="IPR032816">
    <property type="entry name" value="VTT_dom"/>
</dbReference>
<dbReference type="PANTHER" id="PTHR12677">
    <property type="entry name" value="GOLGI APPARATUS MEMBRANE PROTEIN TVP38-RELATED"/>
    <property type="match status" value="1"/>
</dbReference>
<dbReference type="PANTHER" id="PTHR12677:SF58">
    <property type="entry name" value="TVP38_TMEM64 FAMILY MEMBRANE PROTEIN RV0625C"/>
    <property type="match status" value="1"/>
</dbReference>
<dbReference type="Pfam" id="PF09335">
    <property type="entry name" value="VTT_dom"/>
    <property type="match status" value="1"/>
</dbReference>
<name>Y625_MYCTU</name>
<comment type="subcellular location">
    <subcellularLocation>
        <location evidence="2">Cell membrane</location>
        <topology evidence="2">Multi-pass membrane protein</topology>
    </subcellularLocation>
</comment>
<comment type="similarity">
    <text evidence="2">Belongs to the TVP38/TMEM64 family.</text>
</comment>
<organism>
    <name type="scientific">Mycobacterium tuberculosis (strain ATCC 25618 / H37Rv)</name>
    <dbReference type="NCBI Taxonomy" id="83332"/>
    <lineage>
        <taxon>Bacteria</taxon>
        <taxon>Bacillati</taxon>
        <taxon>Actinomycetota</taxon>
        <taxon>Actinomycetes</taxon>
        <taxon>Mycobacteriales</taxon>
        <taxon>Mycobacteriaceae</taxon>
        <taxon>Mycobacterium</taxon>
        <taxon>Mycobacterium tuberculosis complex</taxon>
    </lineage>
</organism>
<accession>P9WFS5</accession>
<accession>L0T4E5</accession>
<accession>P67115</accession>
<accession>P96915</accession>
<protein>
    <recommendedName>
        <fullName>TVP38/TMEM64 family membrane protein Rv0625c</fullName>
    </recommendedName>
</protein>
<evidence type="ECO:0000255" key="1"/>
<evidence type="ECO:0000305" key="2"/>
<evidence type="ECO:0007744" key="3">
    <source>
    </source>
</evidence>
<sequence>MSTHNDSAPTSRRRHIVRLVVFAGFLVGMFYLVAATDVIDVAAVRGAVSATGPAAPLTYVVVSAVLGALFVPGPILAASSGLLFGPLVGVFVTLGATVGTAVVASLVGRRAGRASARALLGGERADRTDALIERCGLWAVVGQRFVPGISDAFASYAFGTFGVPLWQMAVGAFIGSAPRAFAYTALGAAIGDRSPLLASCAIAVWCVTAIIGAFAARHGYRQWRAHARGDGADGGVEDPDREVGAR</sequence>
<feature type="initiator methionine" description="Removed" evidence="3">
    <location>
        <position position="1"/>
    </location>
</feature>
<feature type="chain" id="PRO_0000198636" description="TVP38/TMEM64 family membrane protein Rv0625c">
    <location>
        <begin position="2"/>
        <end position="246"/>
    </location>
</feature>
<feature type="transmembrane region" description="Helical" evidence="1">
    <location>
        <begin position="19"/>
        <end position="39"/>
    </location>
</feature>
<feature type="transmembrane region" description="Helical" evidence="1">
    <location>
        <begin position="57"/>
        <end position="77"/>
    </location>
</feature>
<feature type="transmembrane region" description="Helical" evidence="1">
    <location>
        <begin position="83"/>
        <end position="103"/>
    </location>
</feature>
<feature type="transmembrane region" description="Helical" evidence="1">
    <location>
        <begin position="157"/>
        <end position="177"/>
    </location>
</feature>
<feature type="transmembrane region" description="Helical" evidence="1">
    <location>
        <begin position="196"/>
        <end position="216"/>
    </location>
</feature>
<feature type="modified residue" description="N-acetylserine" evidence="3">
    <location>
        <position position="2"/>
    </location>
</feature>
<gene>
    <name type="ordered locus">Rv0625c</name>
    <name type="ORF">MTCY20H10.06c</name>
</gene>